<keyword id="KW-0119">Carbohydrate metabolism</keyword>
<keyword id="KW-0963">Cytoplasm</keyword>
<keyword id="KW-0294">Fucose metabolism</keyword>
<keyword id="KW-0413">Isomerase</keyword>
<keyword id="KW-0464">Manganese</keyword>
<keyword id="KW-0479">Metal-binding</keyword>
<accession>B1IU39</accession>
<name>FUCI_ECOLC</name>
<sequence length="591" mass="64977">MKKISLPKIGIRPVIDGRRMGVRESLEEQTMNMAKATAALLTEKLRHACGAAVECVISDTCIAGMAEAAACEEKFSSQNVGLTITVTPCWCYGSETIDMDPTRPKAIWGFNGTERPGAVYLAAALAAHSQKGIPAFSIYGHDVQDADDTSIPADVEEKLLRFARAGLAVASMKGKSYLSLGGVSMGIAGSIVDHNFFESWLGMKVQAVDMTELRRRIDQQIYDEAELEMALAWADKNFRYGEDENNKQYQRNAEQSRAVLRESLLMAMCIRDMMQGNSKLADIGRVEESLGYNAIAAGFQGQRHWTDQYPNGDTAEAILNSSFDWNGVREPFVVATENDSLNGVAMLMGHQLTGTAQVFADVRTYWSPEAIERVTGHKLDGLAEHGIIHLINSGSAALDGSCKQRDSEGNPTMKPHWEISQQEADACLAATEWCPAIHEYFRGGGYSSRFLTEGGVPFTMTRVNIIKGLGPVLQIAEGWSVELPKDVHDILNKRTNSTWPTTWFAPRLTGKGPFTDVYSVMANWGANHGVLTIGHVGADFITLASMLRIPVCMHNVEETKVYRPSAWAAHGMDIEGQDYRACQNYGPLYKR</sequence>
<comment type="function">
    <text evidence="1">Converts the aldose L-fucose into the corresponding ketose L-fuculose.</text>
</comment>
<comment type="catalytic activity">
    <reaction evidence="1">
        <text>L-fucose = L-fuculose</text>
        <dbReference type="Rhea" id="RHEA:17233"/>
        <dbReference type="ChEBI" id="CHEBI:2181"/>
        <dbReference type="ChEBI" id="CHEBI:17617"/>
        <dbReference type="EC" id="5.3.1.25"/>
    </reaction>
</comment>
<comment type="cofactor">
    <cofactor evidence="1">
        <name>Mn(2+)</name>
        <dbReference type="ChEBI" id="CHEBI:29035"/>
    </cofactor>
</comment>
<comment type="pathway">
    <text evidence="1">Carbohydrate degradation; L-fucose degradation; L-lactaldehyde and glycerone phosphate from L-fucose: step 1/3.</text>
</comment>
<comment type="subunit">
    <text evidence="1">Homohexamer.</text>
</comment>
<comment type="subcellular location">
    <subcellularLocation>
        <location evidence="1">Cytoplasm</location>
    </subcellularLocation>
</comment>
<comment type="similarity">
    <text evidence="1">Belongs to the L-fucose isomerase family.</text>
</comment>
<reference key="1">
    <citation type="submission" date="2008-02" db="EMBL/GenBank/DDBJ databases">
        <title>Complete sequence of Escherichia coli C str. ATCC 8739.</title>
        <authorList>
            <person name="Copeland A."/>
            <person name="Lucas S."/>
            <person name="Lapidus A."/>
            <person name="Glavina del Rio T."/>
            <person name="Dalin E."/>
            <person name="Tice H."/>
            <person name="Bruce D."/>
            <person name="Goodwin L."/>
            <person name="Pitluck S."/>
            <person name="Kiss H."/>
            <person name="Brettin T."/>
            <person name="Detter J.C."/>
            <person name="Han C."/>
            <person name="Kuske C.R."/>
            <person name="Schmutz J."/>
            <person name="Larimer F."/>
            <person name="Land M."/>
            <person name="Hauser L."/>
            <person name="Kyrpides N."/>
            <person name="Mikhailova N."/>
            <person name="Ingram L."/>
            <person name="Richardson P."/>
        </authorList>
    </citation>
    <scope>NUCLEOTIDE SEQUENCE [LARGE SCALE GENOMIC DNA]</scope>
    <source>
        <strain>ATCC 8739 / DSM 1576 / NBRC 3972 / NCIMB 8545 / WDCM 00012 / Crooks</strain>
    </source>
</reference>
<protein>
    <recommendedName>
        <fullName evidence="1">L-fucose isomerase</fullName>
        <ecNumber evidence="1">5.3.1.25</ecNumber>
    </recommendedName>
    <alternativeName>
        <fullName evidence="1">6-deoxy-L-galactose isomerase</fullName>
    </alternativeName>
    <alternativeName>
        <fullName>FucIase</fullName>
    </alternativeName>
</protein>
<organism>
    <name type="scientific">Escherichia coli (strain ATCC 8739 / DSM 1576 / NBRC 3972 / NCIMB 8545 / WDCM 00012 / Crooks)</name>
    <dbReference type="NCBI Taxonomy" id="481805"/>
    <lineage>
        <taxon>Bacteria</taxon>
        <taxon>Pseudomonadati</taxon>
        <taxon>Pseudomonadota</taxon>
        <taxon>Gammaproteobacteria</taxon>
        <taxon>Enterobacterales</taxon>
        <taxon>Enterobacteriaceae</taxon>
        <taxon>Escherichia</taxon>
    </lineage>
</organism>
<proteinExistence type="inferred from homology"/>
<evidence type="ECO:0000255" key="1">
    <source>
        <dbReference type="HAMAP-Rule" id="MF_01254"/>
    </source>
</evidence>
<gene>
    <name evidence="1" type="primary">fucI</name>
    <name type="ordered locus">EcolC_0910</name>
</gene>
<dbReference type="EC" id="5.3.1.25" evidence="1"/>
<dbReference type="EMBL" id="CP000946">
    <property type="protein sequence ID" value="ACA76579.1"/>
    <property type="molecule type" value="Genomic_DNA"/>
</dbReference>
<dbReference type="RefSeq" id="WP_000724176.1">
    <property type="nucleotide sequence ID" value="NZ_MTFT01000004.1"/>
</dbReference>
<dbReference type="SMR" id="B1IU39"/>
<dbReference type="KEGG" id="ecl:EcolC_0910"/>
<dbReference type="HOGENOM" id="CLU_033326_1_0_6"/>
<dbReference type="UniPathway" id="UPA00563">
    <property type="reaction ID" value="UER00624"/>
</dbReference>
<dbReference type="GO" id="GO:0005737">
    <property type="term" value="C:cytoplasm"/>
    <property type="evidence" value="ECO:0007669"/>
    <property type="project" value="UniProtKB-SubCell"/>
</dbReference>
<dbReference type="GO" id="GO:0008790">
    <property type="term" value="F:arabinose isomerase activity"/>
    <property type="evidence" value="ECO:0007669"/>
    <property type="project" value="TreeGrafter"/>
</dbReference>
<dbReference type="GO" id="GO:0008736">
    <property type="term" value="F:L-fucose isomerase activity"/>
    <property type="evidence" value="ECO:0007669"/>
    <property type="project" value="UniProtKB-UniRule"/>
</dbReference>
<dbReference type="GO" id="GO:0030145">
    <property type="term" value="F:manganese ion binding"/>
    <property type="evidence" value="ECO:0007669"/>
    <property type="project" value="UniProtKB-UniRule"/>
</dbReference>
<dbReference type="GO" id="GO:0019571">
    <property type="term" value="P:D-arabinose catabolic process"/>
    <property type="evidence" value="ECO:0007669"/>
    <property type="project" value="TreeGrafter"/>
</dbReference>
<dbReference type="GO" id="GO:0042355">
    <property type="term" value="P:L-fucose catabolic process"/>
    <property type="evidence" value="ECO:0007669"/>
    <property type="project" value="UniProtKB-UniRule"/>
</dbReference>
<dbReference type="CDD" id="cd03556">
    <property type="entry name" value="L-fucose_isomerase"/>
    <property type="match status" value="1"/>
</dbReference>
<dbReference type="FunFam" id="3.20.14.10:FF:000001">
    <property type="entry name" value="L-fucose isomerase"/>
    <property type="match status" value="1"/>
</dbReference>
<dbReference type="FunFam" id="3.40.275.10:FF:000001">
    <property type="entry name" value="L-fucose isomerase"/>
    <property type="match status" value="1"/>
</dbReference>
<dbReference type="FunFam" id="3.40.50.1070:FF:000001">
    <property type="entry name" value="L-fucose isomerase"/>
    <property type="match status" value="1"/>
</dbReference>
<dbReference type="Gene3D" id="3.40.50.1070">
    <property type="match status" value="1"/>
</dbReference>
<dbReference type="Gene3D" id="3.40.275.10">
    <property type="entry name" value="L-fucose Isomerase, Chain A, domain 2"/>
    <property type="match status" value="1"/>
</dbReference>
<dbReference type="Gene3D" id="3.20.14.10">
    <property type="entry name" value="L-fucose/L-arabinose isomerase, C-terminal"/>
    <property type="match status" value="1"/>
</dbReference>
<dbReference type="HAMAP" id="MF_01254">
    <property type="entry name" value="Fucose_iso"/>
    <property type="match status" value="1"/>
</dbReference>
<dbReference type="InterPro" id="IPR004216">
    <property type="entry name" value="Fuc/Ara_isomerase_C"/>
</dbReference>
<dbReference type="InterPro" id="IPR038393">
    <property type="entry name" value="Fuc_iso_dom3_sf"/>
</dbReference>
<dbReference type="InterPro" id="IPR015888">
    <property type="entry name" value="Fuc_isomerase_C"/>
</dbReference>
<dbReference type="InterPro" id="IPR038391">
    <property type="entry name" value="Fucose_iso_dom1_sf"/>
</dbReference>
<dbReference type="InterPro" id="IPR012888">
    <property type="entry name" value="Fucose_iso_N1"/>
</dbReference>
<dbReference type="InterPro" id="IPR005763">
    <property type="entry name" value="Fucose_isomerase"/>
</dbReference>
<dbReference type="InterPro" id="IPR038392">
    <property type="entry name" value="Fucose_isomerase_dom2_sf"/>
</dbReference>
<dbReference type="InterPro" id="IPR009015">
    <property type="entry name" value="Fucose_isomerase_N/cen_sf"/>
</dbReference>
<dbReference type="InterPro" id="IPR012889">
    <property type="entry name" value="Fucose_isomerase_N2"/>
</dbReference>
<dbReference type="NCBIfam" id="TIGR01089">
    <property type="entry name" value="fucI"/>
    <property type="match status" value="1"/>
</dbReference>
<dbReference type="NCBIfam" id="NF008220">
    <property type="entry name" value="PRK10991.1"/>
    <property type="match status" value="1"/>
</dbReference>
<dbReference type="PANTHER" id="PTHR37840">
    <property type="entry name" value="L-FUCOSE ISOMERASE"/>
    <property type="match status" value="1"/>
</dbReference>
<dbReference type="PANTHER" id="PTHR37840:SF1">
    <property type="entry name" value="L-FUCOSE ISOMERASE"/>
    <property type="match status" value="1"/>
</dbReference>
<dbReference type="Pfam" id="PF02952">
    <property type="entry name" value="Fucose_iso_C"/>
    <property type="match status" value="1"/>
</dbReference>
<dbReference type="Pfam" id="PF07881">
    <property type="entry name" value="Fucose_iso_N1"/>
    <property type="match status" value="1"/>
</dbReference>
<dbReference type="Pfam" id="PF07882">
    <property type="entry name" value="Fucose_iso_N2"/>
    <property type="match status" value="1"/>
</dbReference>
<dbReference type="SUPFAM" id="SSF50443">
    <property type="entry name" value="FucI/AraA C-terminal domain-like"/>
    <property type="match status" value="1"/>
</dbReference>
<dbReference type="SUPFAM" id="SSF53743">
    <property type="entry name" value="FucI/AraA N-terminal and middle domains"/>
    <property type="match status" value="1"/>
</dbReference>
<feature type="chain" id="PRO_1000085803" description="L-fucose isomerase">
    <location>
        <begin position="1"/>
        <end position="591"/>
    </location>
</feature>
<feature type="active site" description="Proton acceptor" evidence="1">
    <location>
        <position position="337"/>
    </location>
</feature>
<feature type="active site" description="Proton acceptor" evidence="1">
    <location>
        <position position="361"/>
    </location>
</feature>
<feature type="binding site" evidence="1">
    <location>
        <position position="337"/>
    </location>
    <ligand>
        <name>Mn(2+)</name>
        <dbReference type="ChEBI" id="CHEBI:29035"/>
    </ligand>
</feature>
<feature type="binding site" evidence="1">
    <location>
        <position position="361"/>
    </location>
    <ligand>
        <name>Mn(2+)</name>
        <dbReference type="ChEBI" id="CHEBI:29035"/>
    </ligand>
</feature>
<feature type="binding site" evidence="1">
    <location>
        <position position="528"/>
    </location>
    <ligand>
        <name>Mn(2+)</name>
        <dbReference type="ChEBI" id="CHEBI:29035"/>
    </ligand>
</feature>